<reference key="1">
    <citation type="submission" date="2006-08" db="EMBL/GenBank/DDBJ databases">
        <authorList>
            <person name="Liu G.Y."/>
        </authorList>
    </citation>
    <scope>NUCLEOTIDE SEQUENCE [LARGE SCALE MRNA]</scope>
</reference>
<gene>
    <name type="primary">UCHL5</name>
</gene>
<name>UCHL5_PIG</name>
<evidence type="ECO:0000250" key="1"/>
<evidence type="ECO:0000250" key="2">
    <source>
        <dbReference type="UniProtKB" id="Q9WUP7"/>
    </source>
</evidence>
<evidence type="ECO:0000250" key="3">
    <source>
        <dbReference type="UniProtKB" id="Q9Y5K5"/>
    </source>
</evidence>
<evidence type="ECO:0000255" key="4">
    <source>
        <dbReference type="PROSITE-ProRule" id="PRU01393"/>
    </source>
</evidence>
<evidence type="ECO:0000255" key="5">
    <source>
        <dbReference type="PROSITE-ProRule" id="PRU01394"/>
    </source>
</evidence>
<evidence type="ECO:0000305" key="6"/>
<feature type="chain" id="PRO_0000288777" description="Ubiquitin carboxyl-terminal hydrolase isozyme L5">
    <location>
        <begin position="1"/>
        <end position="329"/>
    </location>
</feature>
<feature type="domain" description="UCH catalytic" evidence="4">
    <location>
        <begin position="7"/>
        <end position="225"/>
    </location>
</feature>
<feature type="domain" description="ULD" evidence="5">
    <location>
        <begin position="291"/>
        <end position="319"/>
    </location>
</feature>
<feature type="region of interest" description="Interaction with ADRM1" evidence="1">
    <location>
        <begin position="313"/>
        <end position="329"/>
    </location>
</feature>
<feature type="active site" description="Nucleophile" evidence="4">
    <location>
        <position position="88"/>
    </location>
</feature>
<feature type="active site" description="Proton donor" evidence="4">
    <location>
        <position position="164"/>
    </location>
</feature>
<feature type="site" description="Transition state stabilizer" evidence="4">
    <location>
        <position position="82"/>
    </location>
</feature>
<feature type="site" description="Important for enzyme activity" evidence="4">
    <location>
        <position position="179"/>
    </location>
</feature>
<feature type="modified residue" description="N6-succinyllysine" evidence="2">
    <location>
        <position position="47"/>
    </location>
</feature>
<feature type="modified residue" description="N6-acetyllysine" evidence="3">
    <location>
        <position position="158"/>
    </location>
</feature>
<feature type="modified residue" description="N6-succinyllysine" evidence="2">
    <location>
        <position position="289"/>
    </location>
</feature>
<keyword id="KW-0007">Acetylation</keyword>
<keyword id="KW-0963">Cytoplasm</keyword>
<keyword id="KW-0227">DNA damage</keyword>
<keyword id="KW-0233">DNA recombination</keyword>
<keyword id="KW-0234">DNA repair</keyword>
<keyword id="KW-0378">Hydrolase</keyword>
<keyword id="KW-0539">Nucleus</keyword>
<keyword id="KW-0645">Protease</keyword>
<keyword id="KW-0647">Proteasome</keyword>
<keyword id="KW-1185">Reference proteome</keyword>
<keyword id="KW-0788">Thiol protease</keyword>
<keyword id="KW-0804">Transcription</keyword>
<keyword id="KW-0805">Transcription regulation</keyword>
<keyword id="KW-0833">Ubl conjugation pathway</keyword>
<sequence length="329" mass="37577">MTGNAGEWCLMESDPGVFTELIKGFGCRGAQVEEIWSLEPENFEKLKPVHGLIFLFKWQPGEEPAGSVVQDSRLDTIFFAKQVINNACATQAIVSVLLNCTHQDVHLGETLSEFKEFSQSFDAAMKGLALSNSDVIRQVHNSFARQQMFEFDAKTSAKEEDAFHFVSYVPVNGRLYELDGLREGPIDLGACNQDDWISAVRPVIEKRIQKYSEGEIRFNLMAIVSDRKMIYEQKIAELQRQLAEEEPMDTDQGSNMLSAIQSEVAKNQMLIEEEVQKLKRYKIENIRRKHNYLPFIMELLKTLAEHQQLIPLVEKAKEKQNAKKAQETK</sequence>
<protein>
    <recommendedName>
        <fullName>Ubiquitin carboxyl-terminal hydrolase isozyme L5</fullName>
        <shortName>UCH-L5</shortName>
        <ecNumber>3.4.19.12</ecNumber>
    </recommendedName>
    <alternativeName>
        <fullName>Ubiquitin thioesterase L5</fullName>
    </alternativeName>
</protein>
<dbReference type="EC" id="3.4.19.12"/>
<dbReference type="EMBL" id="DQ917642">
    <property type="protein sequence ID" value="ABI97187.1"/>
    <property type="molecule type" value="mRNA"/>
</dbReference>
<dbReference type="RefSeq" id="NP_001116682.1">
    <property type="nucleotide sequence ID" value="NM_001123210.1"/>
</dbReference>
<dbReference type="RefSeq" id="XP_013845139.1">
    <property type="nucleotide sequence ID" value="XM_013989685.1"/>
</dbReference>
<dbReference type="SMR" id="Q06AT3"/>
<dbReference type="FunCoup" id="Q06AT3">
    <property type="interactions" value="2850"/>
</dbReference>
<dbReference type="STRING" id="9823.ENSSSCP00000011515"/>
<dbReference type="PaxDb" id="9823-ENSSSCP00000011515"/>
<dbReference type="PeptideAtlas" id="Q06AT3"/>
<dbReference type="Ensembl" id="ENSSSCT00070023679.1">
    <property type="protein sequence ID" value="ENSSSCP00070019586.1"/>
    <property type="gene ID" value="ENSSSCG00070012107.1"/>
</dbReference>
<dbReference type="Ensembl" id="ENSSSCT00115024092">
    <property type="protein sequence ID" value="ENSSSCP00115022839"/>
    <property type="gene ID" value="ENSSSCG00115013859"/>
</dbReference>
<dbReference type="GeneID" id="100144472"/>
<dbReference type="KEGG" id="ssc:100144472"/>
<dbReference type="CTD" id="51377"/>
<dbReference type="eggNOG" id="KOG2778">
    <property type="taxonomic scope" value="Eukaryota"/>
</dbReference>
<dbReference type="InParanoid" id="Q06AT3"/>
<dbReference type="OrthoDB" id="1924260at2759"/>
<dbReference type="Reactome" id="R-SSC-5689603">
    <property type="pathway name" value="UCH proteinases"/>
</dbReference>
<dbReference type="Proteomes" id="UP000008227">
    <property type="component" value="Unplaced"/>
</dbReference>
<dbReference type="Proteomes" id="UP000314985">
    <property type="component" value="Chromosome 10"/>
</dbReference>
<dbReference type="Proteomes" id="UP000694570">
    <property type="component" value="Unplaced"/>
</dbReference>
<dbReference type="Proteomes" id="UP000694571">
    <property type="component" value="Unplaced"/>
</dbReference>
<dbReference type="Proteomes" id="UP000694720">
    <property type="component" value="Unplaced"/>
</dbReference>
<dbReference type="Proteomes" id="UP000694722">
    <property type="component" value="Unplaced"/>
</dbReference>
<dbReference type="Proteomes" id="UP000694723">
    <property type="component" value="Unplaced"/>
</dbReference>
<dbReference type="Proteomes" id="UP000694724">
    <property type="component" value="Unplaced"/>
</dbReference>
<dbReference type="Proteomes" id="UP000694725">
    <property type="component" value="Unplaced"/>
</dbReference>
<dbReference type="Proteomes" id="UP000694726">
    <property type="component" value="Unplaced"/>
</dbReference>
<dbReference type="Proteomes" id="UP000694727">
    <property type="component" value="Unplaced"/>
</dbReference>
<dbReference type="Proteomes" id="UP000694728">
    <property type="component" value="Unplaced"/>
</dbReference>
<dbReference type="GO" id="GO:0005737">
    <property type="term" value="C:cytoplasm"/>
    <property type="evidence" value="ECO:0000318"/>
    <property type="project" value="GO_Central"/>
</dbReference>
<dbReference type="GO" id="GO:0005829">
    <property type="term" value="C:cytosol"/>
    <property type="evidence" value="ECO:0000250"/>
    <property type="project" value="UniProtKB"/>
</dbReference>
<dbReference type="GO" id="GO:0031011">
    <property type="term" value="C:Ino80 complex"/>
    <property type="evidence" value="ECO:0007669"/>
    <property type="project" value="InterPro"/>
</dbReference>
<dbReference type="GO" id="GO:0005634">
    <property type="term" value="C:nucleus"/>
    <property type="evidence" value="ECO:0000250"/>
    <property type="project" value="UniProtKB"/>
</dbReference>
<dbReference type="GO" id="GO:0000502">
    <property type="term" value="C:proteasome complex"/>
    <property type="evidence" value="ECO:0007669"/>
    <property type="project" value="UniProtKB-KW"/>
</dbReference>
<dbReference type="GO" id="GO:0004843">
    <property type="term" value="F:cysteine-type deubiquitinase activity"/>
    <property type="evidence" value="ECO:0000250"/>
    <property type="project" value="UniProtKB"/>
</dbReference>
<dbReference type="GO" id="GO:0070628">
    <property type="term" value="F:proteasome binding"/>
    <property type="evidence" value="ECO:0007669"/>
    <property type="project" value="InterPro"/>
</dbReference>
<dbReference type="GO" id="GO:0006310">
    <property type="term" value="P:DNA recombination"/>
    <property type="evidence" value="ECO:0007669"/>
    <property type="project" value="UniProtKB-KW"/>
</dbReference>
<dbReference type="GO" id="GO:0006281">
    <property type="term" value="P:DNA repair"/>
    <property type="evidence" value="ECO:0007669"/>
    <property type="project" value="UniProtKB-KW"/>
</dbReference>
<dbReference type="GO" id="GO:0016579">
    <property type="term" value="P:protein deubiquitination"/>
    <property type="evidence" value="ECO:0000250"/>
    <property type="project" value="UniProtKB"/>
</dbReference>
<dbReference type="GO" id="GO:0033044">
    <property type="term" value="P:regulation of chromosome organization"/>
    <property type="evidence" value="ECO:0000318"/>
    <property type="project" value="GO_Central"/>
</dbReference>
<dbReference type="GO" id="GO:0006511">
    <property type="term" value="P:ubiquitin-dependent protein catabolic process"/>
    <property type="evidence" value="ECO:0007669"/>
    <property type="project" value="InterPro"/>
</dbReference>
<dbReference type="CDD" id="cd02255">
    <property type="entry name" value="Peptidase_C12"/>
    <property type="match status" value="1"/>
</dbReference>
<dbReference type="FunFam" id="3.40.532.10:FF:000001">
    <property type="entry name" value="Ubiquitin carboxyl-terminal hydrolase"/>
    <property type="match status" value="1"/>
</dbReference>
<dbReference type="FunFam" id="1.20.58.860:FF:000009">
    <property type="entry name" value="Ubiquitin carboxyl-terminal hydrolase isozyme L5"/>
    <property type="match status" value="1"/>
</dbReference>
<dbReference type="Gene3D" id="1.20.58.860">
    <property type="match status" value="1"/>
</dbReference>
<dbReference type="Gene3D" id="3.40.532.10">
    <property type="entry name" value="Peptidase C12, ubiquitin carboxyl-terminal hydrolase"/>
    <property type="match status" value="1"/>
</dbReference>
<dbReference type="InterPro" id="IPR038765">
    <property type="entry name" value="Papain-like_cys_pep_sf"/>
</dbReference>
<dbReference type="InterPro" id="IPR001578">
    <property type="entry name" value="Peptidase_C12_UCH"/>
</dbReference>
<dbReference type="InterPro" id="IPR036959">
    <property type="entry name" value="Peptidase_C12_UCH_sf"/>
</dbReference>
<dbReference type="InterPro" id="IPR017390">
    <property type="entry name" value="Ubiquitinyl_hydrolase_UCH37"/>
</dbReference>
<dbReference type="InterPro" id="IPR033837">
    <property type="entry name" value="UCH37"/>
</dbReference>
<dbReference type="InterPro" id="IPR041507">
    <property type="entry name" value="UCH_C"/>
</dbReference>
<dbReference type="PANTHER" id="PTHR10589">
    <property type="entry name" value="UBIQUITIN CARBOXYL-TERMINAL HYDROLASE"/>
    <property type="match status" value="1"/>
</dbReference>
<dbReference type="PANTHER" id="PTHR10589:SF16">
    <property type="entry name" value="UBIQUITIN CARBOXYL-TERMINAL HYDROLASE ISOZYME L5"/>
    <property type="match status" value="1"/>
</dbReference>
<dbReference type="Pfam" id="PF01088">
    <property type="entry name" value="Peptidase_C12"/>
    <property type="match status" value="1"/>
</dbReference>
<dbReference type="Pfam" id="PF18031">
    <property type="entry name" value="UCH_C"/>
    <property type="match status" value="1"/>
</dbReference>
<dbReference type="PIRSF" id="PIRSF038120">
    <property type="entry name" value="Ubiquitinyl_hydrolase_UCH37"/>
    <property type="match status" value="1"/>
</dbReference>
<dbReference type="PRINTS" id="PR00707">
    <property type="entry name" value="UBCTHYDRLASE"/>
</dbReference>
<dbReference type="SUPFAM" id="SSF54001">
    <property type="entry name" value="Cysteine proteinases"/>
    <property type="match status" value="1"/>
</dbReference>
<dbReference type="PROSITE" id="PS52048">
    <property type="entry name" value="UCH_DOMAIN"/>
    <property type="match status" value="1"/>
</dbReference>
<dbReference type="PROSITE" id="PS52049">
    <property type="entry name" value="ULD"/>
    <property type="match status" value="1"/>
</dbReference>
<accession>Q06AT3</accession>
<organism>
    <name type="scientific">Sus scrofa</name>
    <name type="common">Pig</name>
    <dbReference type="NCBI Taxonomy" id="9823"/>
    <lineage>
        <taxon>Eukaryota</taxon>
        <taxon>Metazoa</taxon>
        <taxon>Chordata</taxon>
        <taxon>Craniata</taxon>
        <taxon>Vertebrata</taxon>
        <taxon>Euteleostomi</taxon>
        <taxon>Mammalia</taxon>
        <taxon>Eutheria</taxon>
        <taxon>Laurasiatheria</taxon>
        <taxon>Artiodactyla</taxon>
        <taxon>Suina</taxon>
        <taxon>Suidae</taxon>
        <taxon>Sus</taxon>
    </lineage>
</organism>
<comment type="function">
    <text evidence="1">Protease that specifically cleaves 'Lys-48'-linked polyubiquitin chains. Deubiquitinating enzyme associated with the 19S regulatory subunit of the 26S proteasome. Putative regulatory component of the INO80 complex; however is inactive in the INO80 complex and is activated by a transient interaction of the INO80 complex with the proteasome via ADRM1 (By similarity).</text>
</comment>
<comment type="catalytic activity">
    <reaction>
        <text>Thiol-dependent hydrolysis of ester, thioester, amide, peptide and isopeptide bonds formed by the C-terminal Gly of ubiquitin (a 76-residue protein attached to proteins as an intracellular targeting signal).</text>
        <dbReference type="EC" id="3.4.19.12"/>
    </reaction>
</comment>
<comment type="activity regulation">
    <text evidence="1">Activated by ADRM1. Inhibited by interaction with NFRKB (By similarity).</text>
</comment>
<comment type="subunit">
    <text evidence="1">Component of the 19S (PA700) regulatory complex of the 26S proteasome. Interacts with ADRM1 and NFRKB. Component of the INO80 complex; specifically part of a complex module associated with N-terminus of INO80 (By similarity).</text>
</comment>
<comment type="subcellular location">
    <subcellularLocation>
        <location evidence="1">Cytoplasm</location>
    </subcellularLocation>
    <subcellularLocation>
        <location evidence="1">Nucleus</location>
    </subcellularLocation>
    <text evidence="1">Associates with the proteasome 19S subunit in the cytoplasm. Associates with the INO80 complex in the nucleus (By similarity).</text>
</comment>
<comment type="similarity">
    <text evidence="6">Belongs to the peptidase C12 family.</text>
</comment>
<proteinExistence type="evidence at transcript level"/>